<reference key="1">
    <citation type="journal article" date="2001" name="J. Biol. Chem.">
        <title>Structural compensation for the deficit of rRNA with proteins in the mammalian mitochondrial ribosome. Systematic analysis of protein components of the large ribosomal subunit from mammalian mitochondria.</title>
        <authorList>
            <person name="Suzuki T."/>
            <person name="Terasaki M."/>
            <person name="Takemoto-Hori C."/>
            <person name="Hanada T."/>
            <person name="Ueda T."/>
            <person name="Wada A."/>
            <person name="Watanabe K."/>
        </authorList>
    </citation>
    <scope>NUCLEOTIDE SEQUENCE [MRNA]</scope>
</reference>
<reference key="2">
    <citation type="journal article" date="2005" name="Science">
        <title>The transcriptional landscape of the mammalian genome.</title>
        <authorList>
            <person name="Carninci P."/>
            <person name="Kasukawa T."/>
            <person name="Katayama S."/>
            <person name="Gough J."/>
            <person name="Frith M.C."/>
            <person name="Maeda N."/>
            <person name="Oyama R."/>
            <person name="Ravasi T."/>
            <person name="Lenhard B."/>
            <person name="Wells C."/>
            <person name="Kodzius R."/>
            <person name="Shimokawa K."/>
            <person name="Bajic V.B."/>
            <person name="Brenner S.E."/>
            <person name="Batalov S."/>
            <person name="Forrest A.R."/>
            <person name="Zavolan M."/>
            <person name="Davis M.J."/>
            <person name="Wilming L.G."/>
            <person name="Aidinis V."/>
            <person name="Allen J.E."/>
            <person name="Ambesi-Impiombato A."/>
            <person name="Apweiler R."/>
            <person name="Aturaliya R.N."/>
            <person name="Bailey T.L."/>
            <person name="Bansal M."/>
            <person name="Baxter L."/>
            <person name="Beisel K.W."/>
            <person name="Bersano T."/>
            <person name="Bono H."/>
            <person name="Chalk A.M."/>
            <person name="Chiu K.P."/>
            <person name="Choudhary V."/>
            <person name="Christoffels A."/>
            <person name="Clutterbuck D.R."/>
            <person name="Crowe M.L."/>
            <person name="Dalla E."/>
            <person name="Dalrymple B.P."/>
            <person name="de Bono B."/>
            <person name="Della Gatta G."/>
            <person name="di Bernardo D."/>
            <person name="Down T."/>
            <person name="Engstrom P."/>
            <person name="Fagiolini M."/>
            <person name="Faulkner G."/>
            <person name="Fletcher C.F."/>
            <person name="Fukushima T."/>
            <person name="Furuno M."/>
            <person name="Futaki S."/>
            <person name="Gariboldi M."/>
            <person name="Georgii-Hemming P."/>
            <person name="Gingeras T.R."/>
            <person name="Gojobori T."/>
            <person name="Green R.E."/>
            <person name="Gustincich S."/>
            <person name="Harbers M."/>
            <person name="Hayashi Y."/>
            <person name="Hensch T.K."/>
            <person name="Hirokawa N."/>
            <person name="Hill D."/>
            <person name="Huminiecki L."/>
            <person name="Iacono M."/>
            <person name="Ikeo K."/>
            <person name="Iwama A."/>
            <person name="Ishikawa T."/>
            <person name="Jakt M."/>
            <person name="Kanapin A."/>
            <person name="Katoh M."/>
            <person name="Kawasawa Y."/>
            <person name="Kelso J."/>
            <person name="Kitamura H."/>
            <person name="Kitano H."/>
            <person name="Kollias G."/>
            <person name="Krishnan S.P."/>
            <person name="Kruger A."/>
            <person name="Kummerfeld S.K."/>
            <person name="Kurochkin I.V."/>
            <person name="Lareau L.F."/>
            <person name="Lazarevic D."/>
            <person name="Lipovich L."/>
            <person name="Liu J."/>
            <person name="Liuni S."/>
            <person name="McWilliam S."/>
            <person name="Madan Babu M."/>
            <person name="Madera M."/>
            <person name="Marchionni L."/>
            <person name="Matsuda H."/>
            <person name="Matsuzawa S."/>
            <person name="Miki H."/>
            <person name="Mignone F."/>
            <person name="Miyake S."/>
            <person name="Morris K."/>
            <person name="Mottagui-Tabar S."/>
            <person name="Mulder N."/>
            <person name="Nakano N."/>
            <person name="Nakauchi H."/>
            <person name="Ng P."/>
            <person name="Nilsson R."/>
            <person name="Nishiguchi S."/>
            <person name="Nishikawa S."/>
            <person name="Nori F."/>
            <person name="Ohara O."/>
            <person name="Okazaki Y."/>
            <person name="Orlando V."/>
            <person name="Pang K.C."/>
            <person name="Pavan W.J."/>
            <person name="Pavesi G."/>
            <person name="Pesole G."/>
            <person name="Petrovsky N."/>
            <person name="Piazza S."/>
            <person name="Reed J."/>
            <person name="Reid J.F."/>
            <person name="Ring B.Z."/>
            <person name="Ringwald M."/>
            <person name="Rost B."/>
            <person name="Ruan Y."/>
            <person name="Salzberg S.L."/>
            <person name="Sandelin A."/>
            <person name="Schneider C."/>
            <person name="Schoenbach C."/>
            <person name="Sekiguchi K."/>
            <person name="Semple C.A."/>
            <person name="Seno S."/>
            <person name="Sessa L."/>
            <person name="Sheng Y."/>
            <person name="Shibata Y."/>
            <person name="Shimada H."/>
            <person name="Shimada K."/>
            <person name="Silva D."/>
            <person name="Sinclair B."/>
            <person name="Sperling S."/>
            <person name="Stupka E."/>
            <person name="Sugiura K."/>
            <person name="Sultana R."/>
            <person name="Takenaka Y."/>
            <person name="Taki K."/>
            <person name="Tammoja K."/>
            <person name="Tan S.L."/>
            <person name="Tang S."/>
            <person name="Taylor M.S."/>
            <person name="Tegner J."/>
            <person name="Teichmann S.A."/>
            <person name="Ueda H.R."/>
            <person name="van Nimwegen E."/>
            <person name="Verardo R."/>
            <person name="Wei C.L."/>
            <person name="Yagi K."/>
            <person name="Yamanishi H."/>
            <person name="Zabarovsky E."/>
            <person name="Zhu S."/>
            <person name="Zimmer A."/>
            <person name="Hide W."/>
            <person name="Bult C."/>
            <person name="Grimmond S.M."/>
            <person name="Teasdale R.D."/>
            <person name="Liu E.T."/>
            <person name="Brusic V."/>
            <person name="Quackenbush J."/>
            <person name="Wahlestedt C."/>
            <person name="Mattick J.S."/>
            <person name="Hume D.A."/>
            <person name="Kai C."/>
            <person name="Sasaki D."/>
            <person name="Tomaru Y."/>
            <person name="Fukuda S."/>
            <person name="Kanamori-Katayama M."/>
            <person name="Suzuki M."/>
            <person name="Aoki J."/>
            <person name="Arakawa T."/>
            <person name="Iida J."/>
            <person name="Imamura K."/>
            <person name="Itoh M."/>
            <person name="Kato T."/>
            <person name="Kawaji H."/>
            <person name="Kawagashira N."/>
            <person name="Kawashima T."/>
            <person name="Kojima M."/>
            <person name="Kondo S."/>
            <person name="Konno H."/>
            <person name="Nakano K."/>
            <person name="Ninomiya N."/>
            <person name="Nishio T."/>
            <person name="Okada M."/>
            <person name="Plessy C."/>
            <person name="Shibata K."/>
            <person name="Shiraki T."/>
            <person name="Suzuki S."/>
            <person name="Tagami M."/>
            <person name="Waki K."/>
            <person name="Watahiki A."/>
            <person name="Okamura-Oho Y."/>
            <person name="Suzuki H."/>
            <person name="Kawai J."/>
            <person name="Hayashizaki Y."/>
        </authorList>
    </citation>
    <scope>NUCLEOTIDE SEQUENCE [LARGE SCALE MRNA]</scope>
    <source>
        <strain>C57BL/6J</strain>
        <strain>DBA/2J</strain>
        <tissue>Kidney</tissue>
        <tissue>Small intestine</tissue>
    </source>
</reference>
<reference key="3">
    <citation type="journal article" date="2004" name="Genome Res.">
        <title>The status, quality, and expansion of the NIH full-length cDNA project: the Mammalian Gene Collection (MGC).</title>
        <authorList>
            <consortium name="The MGC Project Team"/>
        </authorList>
    </citation>
    <scope>NUCLEOTIDE SEQUENCE [LARGE SCALE MRNA]</scope>
    <source>
        <strain>C57BL/6J</strain>
        <tissue>Brain</tissue>
        <tissue>Mammary gland</tissue>
        <tissue>Testis</tissue>
    </source>
</reference>
<reference key="4">
    <citation type="journal article" date="2010" name="Cell">
        <title>A tissue-specific atlas of mouse protein phosphorylation and expression.</title>
        <authorList>
            <person name="Huttlin E.L."/>
            <person name="Jedrychowski M.P."/>
            <person name="Elias J.E."/>
            <person name="Goswami T."/>
            <person name="Rad R."/>
            <person name="Beausoleil S.A."/>
            <person name="Villen J."/>
            <person name="Haas W."/>
            <person name="Sowa M.E."/>
            <person name="Gygi S.P."/>
        </authorList>
    </citation>
    <scope>IDENTIFICATION BY MASS SPECTROMETRY [LARGE SCALE ANALYSIS]</scope>
    <source>
        <tissue>Brain</tissue>
        <tissue>Heart</tissue>
        <tissue>Kidney</tissue>
    </source>
</reference>
<organism>
    <name type="scientific">Mus musculus</name>
    <name type="common">Mouse</name>
    <dbReference type="NCBI Taxonomy" id="10090"/>
    <lineage>
        <taxon>Eukaryota</taxon>
        <taxon>Metazoa</taxon>
        <taxon>Chordata</taxon>
        <taxon>Craniata</taxon>
        <taxon>Vertebrata</taxon>
        <taxon>Euteleostomi</taxon>
        <taxon>Mammalia</taxon>
        <taxon>Eutheria</taxon>
        <taxon>Euarchontoglires</taxon>
        <taxon>Glires</taxon>
        <taxon>Rodentia</taxon>
        <taxon>Myomorpha</taxon>
        <taxon>Muroidea</taxon>
        <taxon>Muridae</taxon>
        <taxon>Murinae</taxon>
        <taxon>Mus</taxon>
        <taxon>Mus</taxon>
    </lineage>
</organism>
<evidence type="ECO:0000250" key="1">
    <source>
        <dbReference type="UniProtKB" id="O75394"/>
    </source>
</evidence>
<evidence type="ECO:0000250" key="2">
    <source>
        <dbReference type="UniProtKB" id="Q3SZ47"/>
    </source>
</evidence>
<evidence type="ECO:0000305" key="3"/>
<name>RM33_MOUSE</name>
<comment type="subunit">
    <text evidence="1">Component of the mitochondrial ribosome large subunit (39S) which comprises a 16S rRNA and about 50 distinct proteins.</text>
</comment>
<comment type="subcellular location">
    <subcellularLocation>
        <location evidence="1">Mitochondrion</location>
    </subcellularLocation>
</comment>
<comment type="similarity">
    <text evidence="3">Belongs to the bacterial ribosomal protein bL33 family.</text>
</comment>
<keyword id="KW-0496">Mitochondrion</keyword>
<keyword id="KW-1185">Reference proteome</keyword>
<keyword id="KW-0687">Ribonucleoprotein</keyword>
<keyword id="KW-0689">Ribosomal protein</keyword>
<keyword id="KW-0809">Transit peptide</keyword>
<proteinExistence type="evidence at protein level"/>
<feature type="transit peptide" description="Mitochondrion" evidence="2">
    <location>
        <begin position="1"/>
        <end position="8"/>
    </location>
</feature>
<feature type="chain" id="PRO_0000238626" description="Large ribosomal subunit protein bL33m">
    <location>
        <begin position="9"/>
        <end position="65"/>
    </location>
</feature>
<feature type="sequence conflict" description="In Ref. 2; BAB25665." evidence="3" ref="2">
    <original>E</original>
    <variation>G</variation>
    <location>
        <position position="58"/>
    </location>
</feature>
<dbReference type="EMBL" id="AB049651">
    <property type="protein sequence ID" value="BAB40856.1"/>
    <property type="molecule type" value="mRNA"/>
</dbReference>
<dbReference type="EMBL" id="AK002421">
    <property type="protein sequence ID" value="BAB22088.1"/>
    <property type="molecule type" value="mRNA"/>
</dbReference>
<dbReference type="EMBL" id="AK008431">
    <property type="protein sequence ID" value="BAB25665.1"/>
    <property type="molecule type" value="mRNA"/>
</dbReference>
<dbReference type="EMBL" id="AK021173">
    <property type="protein sequence ID" value="BAB32314.1"/>
    <property type="molecule type" value="mRNA"/>
</dbReference>
<dbReference type="EMBL" id="AK167883">
    <property type="protein sequence ID" value="BAE39896.1"/>
    <property type="molecule type" value="mRNA"/>
</dbReference>
<dbReference type="EMBL" id="BC037363">
    <property type="protein sequence ID" value="AAH37363.1"/>
    <property type="molecule type" value="mRNA"/>
</dbReference>
<dbReference type="EMBL" id="BC051471">
    <property type="protein sequence ID" value="AAH51471.1"/>
    <property type="molecule type" value="mRNA"/>
</dbReference>
<dbReference type="EMBL" id="BC055724">
    <property type="protein sequence ID" value="AAH55724.1"/>
    <property type="molecule type" value="mRNA"/>
</dbReference>
<dbReference type="EMBL" id="BC059722">
    <property type="protein sequence ID" value="AAH59722.1"/>
    <property type="molecule type" value="mRNA"/>
</dbReference>
<dbReference type="CCDS" id="CCDS39056.1"/>
<dbReference type="RefSeq" id="NP_080072.2">
    <property type="nucleotide sequence ID" value="NM_025796.3"/>
</dbReference>
<dbReference type="SMR" id="Q9CQP0"/>
<dbReference type="BioGRID" id="211759">
    <property type="interactions" value="6"/>
</dbReference>
<dbReference type="ComplexPortal" id="CPX-5302">
    <property type="entry name" value="39S mitochondrial large ribosomal subunit"/>
</dbReference>
<dbReference type="FunCoup" id="Q9CQP0">
    <property type="interactions" value="1048"/>
</dbReference>
<dbReference type="STRING" id="10090.ENSMUSP00000031024"/>
<dbReference type="PhosphoSitePlus" id="Q9CQP0"/>
<dbReference type="PaxDb" id="10090-ENSMUSP00000031024"/>
<dbReference type="ProteomicsDB" id="299910"/>
<dbReference type="Pumba" id="Q9CQP0"/>
<dbReference type="TopDownProteomics" id="Q9CQP0"/>
<dbReference type="Antibodypedia" id="58354">
    <property type="antibodies" value="109 antibodies from 23 providers"/>
</dbReference>
<dbReference type="DNASU" id="66845"/>
<dbReference type="Ensembl" id="ENSMUST00000031024.14">
    <property type="protein sequence ID" value="ENSMUSP00000031024.8"/>
    <property type="gene ID" value="ENSMUSG00000106918.4"/>
</dbReference>
<dbReference type="GeneID" id="66845"/>
<dbReference type="KEGG" id="mmu:66845"/>
<dbReference type="UCSC" id="uc008wyt.2">
    <property type="organism name" value="mouse"/>
</dbReference>
<dbReference type="AGR" id="MGI:2137225"/>
<dbReference type="CTD" id="9553"/>
<dbReference type="MGI" id="MGI:2137225">
    <property type="gene designation" value="Mrpl33"/>
</dbReference>
<dbReference type="VEuPathDB" id="HostDB:ENSMUSG00000106918"/>
<dbReference type="eggNOG" id="KOG3505">
    <property type="taxonomic scope" value="Eukaryota"/>
</dbReference>
<dbReference type="GeneTree" id="ENSGT00390000010130"/>
<dbReference type="HOGENOM" id="CLU_190949_1_2_1"/>
<dbReference type="InParanoid" id="Q9CQP0"/>
<dbReference type="OMA" id="TCFNVKR"/>
<dbReference type="OrthoDB" id="27312at9989"/>
<dbReference type="TreeFam" id="TF300279"/>
<dbReference type="Reactome" id="R-MMU-5389840">
    <property type="pathway name" value="Mitochondrial translation elongation"/>
</dbReference>
<dbReference type="Reactome" id="R-MMU-5419276">
    <property type="pathway name" value="Mitochondrial translation termination"/>
</dbReference>
<dbReference type="BioGRID-ORCS" id="66845">
    <property type="hits" value="19 hits in 75 CRISPR screens"/>
</dbReference>
<dbReference type="PRO" id="PR:Q9CQP0"/>
<dbReference type="Proteomes" id="UP000000589">
    <property type="component" value="Chromosome 5"/>
</dbReference>
<dbReference type="RNAct" id="Q9CQP0">
    <property type="molecule type" value="protein"/>
</dbReference>
<dbReference type="Bgee" id="ENSMUSG00000106918">
    <property type="expression patterns" value="Expressed in granulocyte and 266 other cell types or tissues"/>
</dbReference>
<dbReference type="ExpressionAtlas" id="Q9CQP0">
    <property type="expression patterns" value="baseline and differential"/>
</dbReference>
<dbReference type="GO" id="GO:0005829">
    <property type="term" value="C:cytosol"/>
    <property type="evidence" value="ECO:0007669"/>
    <property type="project" value="UniProtKB-ARBA"/>
</dbReference>
<dbReference type="GO" id="GO:0005743">
    <property type="term" value="C:mitochondrial inner membrane"/>
    <property type="evidence" value="ECO:0000303"/>
    <property type="project" value="ComplexPortal"/>
</dbReference>
<dbReference type="GO" id="GO:0005762">
    <property type="term" value="C:mitochondrial large ribosomal subunit"/>
    <property type="evidence" value="ECO:0000250"/>
    <property type="project" value="UniProtKB"/>
</dbReference>
<dbReference type="GO" id="GO:0005739">
    <property type="term" value="C:mitochondrion"/>
    <property type="evidence" value="ECO:0007005"/>
    <property type="project" value="MGI"/>
</dbReference>
<dbReference type="GO" id="GO:0003735">
    <property type="term" value="F:structural constituent of ribosome"/>
    <property type="evidence" value="ECO:0007669"/>
    <property type="project" value="InterPro"/>
</dbReference>
<dbReference type="GO" id="GO:0032543">
    <property type="term" value="P:mitochondrial translation"/>
    <property type="evidence" value="ECO:0000303"/>
    <property type="project" value="ComplexPortal"/>
</dbReference>
<dbReference type="FunFam" id="2.20.28.120:FF:000005">
    <property type="entry name" value="39S ribosomal protein L33, mitochondrial"/>
    <property type="match status" value="1"/>
</dbReference>
<dbReference type="Gene3D" id="2.20.28.120">
    <property type="entry name" value="Ribosomal protein L33"/>
    <property type="match status" value="1"/>
</dbReference>
<dbReference type="InterPro" id="IPR052008">
    <property type="entry name" value="Mitoribosomal_protein_bL33"/>
</dbReference>
<dbReference type="InterPro" id="IPR001705">
    <property type="entry name" value="Ribosomal_bL33"/>
</dbReference>
<dbReference type="InterPro" id="IPR038584">
    <property type="entry name" value="Ribosomal_bL33_sf"/>
</dbReference>
<dbReference type="InterPro" id="IPR011332">
    <property type="entry name" value="Ribosomal_zn-bd"/>
</dbReference>
<dbReference type="NCBIfam" id="TIGR01023">
    <property type="entry name" value="rpmG_bact"/>
    <property type="match status" value="1"/>
</dbReference>
<dbReference type="PANTHER" id="PTHR47037">
    <property type="entry name" value="39S RIBOSOMAL PROTEIN L33, MITOCHONDRIAL"/>
    <property type="match status" value="1"/>
</dbReference>
<dbReference type="PANTHER" id="PTHR47037:SF1">
    <property type="entry name" value="LARGE RIBOSOMAL SUBUNIT PROTEIN BL33M"/>
    <property type="match status" value="1"/>
</dbReference>
<dbReference type="Pfam" id="PF00471">
    <property type="entry name" value="Ribosomal_L33"/>
    <property type="match status" value="1"/>
</dbReference>
<dbReference type="SUPFAM" id="SSF57829">
    <property type="entry name" value="Zn-binding ribosomal proteins"/>
    <property type="match status" value="1"/>
</dbReference>
<accession>Q9CQP0</accession>
<accession>Q9D860</accession>
<gene>
    <name type="primary">Mrpl33</name>
</gene>
<protein>
    <recommendedName>
        <fullName evidence="3">Large ribosomal subunit protein bL33m</fullName>
    </recommendedName>
    <alternativeName>
        <fullName>39S ribosomal protein L33, mitochondrial</fullName>
        <shortName>L33mt</shortName>
        <shortName>MRP-L33</shortName>
    </alternativeName>
</protein>
<sequence length="65" mass="7416">MLLSAVSFAKSKSKTILVKLVSQAGTGFSFNHKRSRLREKLSLLHYDPIVNKKVLFVEQKKIRSL</sequence>